<organism>
    <name type="scientific">Bacillus licheniformis</name>
    <dbReference type="NCBI Taxonomy" id="1402"/>
    <lineage>
        <taxon>Bacteria</taxon>
        <taxon>Bacillati</taxon>
        <taxon>Bacillota</taxon>
        <taxon>Bacilli</taxon>
        <taxon>Bacillales</taxon>
        <taxon>Bacillaceae</taxon>
        <taxon>Bacillus</taxon>
    </lineage>
</organism>
<accession>Q99164</accession>
<name>YAL1_BACLI</name>
<reference key="1">
    <citation type="journal article" date="1991" name="J. Gen. Microbiol.">
        <title>Identification of four unique clones encoding 10 kDa proteins from Bacillus that cause phenotypic complementation of a phoA mutant strain of Escherichia coli.</title>
        <authorList>
            <person name="Lee J.W.K."/>
            <person name="Edwards C.W."/>
            <person name="Hulett F.M."/>
        </authorList>
    </citation>
    <scope>NUCLEOTIDE SEQUENCE [GENOMIC DNA]</scope>
    <source>
        <strain>MC14</strain>
    </source>
</reference>
<evidence type="ECO:0000305" key="1"/>
<proteinExistence type="predicted"/>
<protein>
    <recommendedName>
        <fullName>Uncharacterized 10.1 kDa protein in ORF3 5'region</fullName>
    </recommendedName>
</protein>
<sequence length="89" mass="10071">MPEAPELDIFQKEVQEMKADQKSLEQRVSTLERTSDRHDQQIISINEKLNKIEENTTWIKRSITGAIITAVSTGIIGGAIAVFYNLLQK</sequence>
<gene>
    <name type="primary">xpaL1</name>
</gene>
<comment type="similarity">
    <text evidence="1">To B.licheniformis xpaF1 and to B.subtilis XhlA.</text>
</comment>
<feature type="chain" id="PRO_0000066117" description="Uncharacterized 10.1 kDa protein in ORF3 5'region">
    <location>
        <begin position="1"/>
        <end position="89"/>
    </location>
</feature>
<dbReference type="EMBL" id="M63942">
    <property type="protein sequence ID" value="AAA22886.1"/>
    <property type="molecule type" value="Genomic_DNA"/>
</dbReference>
<dbReference type="PIR" id="B49754">
    <property type="entry name" value="B49754"/>
</dbReference>
<dbReference type="RefSeq" id="WP_011197809.1">
    <property type="nucleotide sequence ID" value="NZ_BEXU01000022.1"/>
</dbReference>
<dbReference type="SMR" id="Q99164"/>
<dbReference type="GeneID" id="92862066"/>
<dbReference type="PATRIC" id="fig|1402.63.peg.621"/>
<dbReference type="OMA" id="AICTGVI"/>
<dbReference type="InterPro" id="IPR019715">
    <property type="entry name" value="Haemolysin_XhlA"/>
</dbReference>
<dbReference type="Pfam" id="PF10779">
    <property type="entry name" value="XhlA"/>
    <property type="match status" value="1"/>
</dbReference>
<dbReference type="SUPFAM" id="SSF57997">
    <property type="entry name" value="Tropomyosin"/>
    <property type="match status" value="1"/>
</dbReference>